<sequence length="274" mass="30437">MTQPAVYVVSDSTGETAELVTRAALSQFGQTPKFIHRFHHVDSSHMIEEIVDLVAVNNGIIVHTIVLESVREELNKTAQAFGVPIIDLFGPLLNQLEETYKIKPLSEPGRVRSMDEAYFNKVAAIEFAVENDDGRNPRGILQADYVLIGISRTSKTPLSQYLALKGLKIVNIPIVPEAQIPDELFEIDPQKIIGLKISKQKLTKIRQERLISIGLPGAGTYASNQRIDEELAIFDKLASKLNCFVLDVTNKAIEETANEILIHIGEIVDENLEL</sequence>
<organism>
    <name type="scientific">Listeria welshimeri serovar 6b (strain ATCC 35897 / DSM 20650 / CCUG 15529 / CIP 8149 / NCTC 11857 / SLCC 5334 / V8)</name>
    <dbReference type="NCBI Taxonomy" id="386043"/>
    <lineage>
        <taxon>Bacteria</taxon>
        <taxon>Bacillati</taxon>
        <taxon>Bacillota</taxon>
        <taxon>Bacilli</taxon>
        <taxon>Bacillales</taxon>
        <taxon>Listeriaceae</taxon>
        <taxon>Listeria</taxon>
    </lineage>
</organism>
<comment type="function">
    <text evidence="1">Bifunctional serine/threonine kinase and phosphorylase involved in the regulation of the pyruvate, phosphate dikinase (PPDK) by catalyzing its phosphorylation/dephosphorylation.</text>
</comment>
<comment type="catalytic activity">
    <reaction evidence="1">
        <text>N(tele)-phospho-L-histidyl/L-threonyl-[pyruvate, phosphate dikinase] + ADP = N(tele)-phospho-L-histidyl/O-phospho-L-threonyl-[pyruvate, phosphate dikinase] + AMP + H(+)</text>
        <dbReference type="Rhea" id="RHEA:43692"/>
        <dbReference type="Rhea" id="RHEA-COMP:10650"/>
        <dbReference type="Rhea" id="RHEA-COMP:10651"/>
        <dbReference type="ChEBI" id="CHEBI:15378"/>
        <dbReference type="ChEBI" id="CHEBI:30013"/>
        <dbReference type="ChEBI" id="CHEBI:61977"/>
        <dbReference type="ChEBI" id="CHEBI:83586"/>
        <dbReference type="ChEBI" id="CHEBI:456215"/>
        <dbReference type="ChEBI" id="CHEBI:456216"/>
        <dbReference type="EC" id="2.7.11.32"/>
    </reaction>
</comment>
<comment type="catalytic activity">
    <reaction evidence="1">
        <text>N(tele)-phospho-L-histidyl/O-phospho-L-threonyl-[pyruvate, phosphate dikinase] + phosphate + H(+) = N(tele)-phospho-L-histidyl/L-threonyl-[pyruvate, phosphate dikinase] + diphosphate</text>
        <dbReference type="Rhea" id="RHEA:43696"/>
        <dbReference type="Rhea" id="RHEA-COMP:10650"/>
        <dbReference type="Rhea" id="RHEA-COMP:10651"/>
        <dbReference type="ChEBI" id="CHEBI:15378"/>
        <dbReference type="ChEBI" id="CHEBI:30013"/>
        <dbReference type="ChEBI" id="CHEBI:33019"/>
        <dbReference type="ChEBI" id="CHEBI:43474"/>
        <dbReference type="ChEBI" id="CHEBI:61977"/>
        <dbReference type="ChEBI" id="CHEBI:83586"/>
        <dbReference type="EC" id="2.7.4.27"/>
    </reaction>
</comment>
<comment type="similarity">
    <text evidence="1">Belongs to the pyruvate, phosphate/water dikinase regulatory protein family. PDRP subfamily.</text>
</comment>
<protein>
    <recommendedName>
        <fullName evidence="1">Putative pyruvate, phosphate dikinase regulatory protein 1</fullName>
        <shortName evidence="1">PPDK regulatory protein 1</shortName>
        <ecNumber evidence="1">2.7.11.32</ecNumber>
        <ecNumber evidence="1">2.7.4.27</ecNumber>
    </recommendedName>
</protein>
<keyword id="KW-0418">Kinase</keyword>
<keyword id="KW-0547">Nucleotide-binding</keyword>
<keyword id="KW-0723">Serine/threonine-protein kinase</keyword>
<keyword id="KW-0808">Transferase</keyword>
<proteinExistence type="inferred from homology"/>
<gene>
    <name type="ordered locus">lwe1472</name>
</gene>
<feature type="chain" id="PRO_0000316694" description="Putative pyruvate, phosphate dikinase regulatory protein 1">
    <location>
        <begin position="1"/>
        <end position="274"/>
    </location>
</feature>
<feature type="binding site" evidence="1">
    <location>
        <begin position="149"/>
        <end position="156"/>
    </location>
    <ligand>
        <name>ADP</name>
        <dbReference type="ChEBI" id="CHEBI:456216"/>
    </ligand>
</feature>
<dbReference type="EC" id="2.7.11.32" evidence="1"/>
<dbReference type="EC" id="2.7.4.27" evidence="1"/>
<dbReference type="EMBL" id="AM263198">
    <property type="protein sequence ID" value="CAK20890.1"/>
    <property type="molecule type" value="Genomic_DNA"/>
</dbReference>
<dbReference type="RefSeq" id="WP_011702265.1">
    <property type="nucleotide sequence ID" value="NC_008555.1"/>
</dbReference>
<dbReference type="SMR" id="A0AIQ8"/>
<dbReference type="STRING" id="386043.lwe1472"/>
<dbReference type="GeneID" id="61189348"/>
<dbReference type="KEGG" id="lwe:lwe1472"/>
<dbReference type="eggNOG" id="COG1806">
    <property type="taxonomic scope" value="Bacteria"/>
</dbReference>
<dbReference type="HOGENOM" id="CLU_046206_2_1_9"/>
<dbReference type="OrthoDB" id="9782201at2"/>
<dbReference type="Proteomes" id="UP000000779">
    <property type="component" value="Chromosome"/>
</dbReference>
<dbReference type="GO" id="GO:0043531">
    <property type="term" value="F:ADP binding"/>
    <property type="evidence" value="ECO:0007669"/>
    <property type="project" value="UniProtKB-UniRule"/>
</dbReference>
<dbReference type="GO" id="GO:0005524">
    <property type="term" value="F:ATP binding"/>
    <property type="evidence" value="ECO:0007669"/>
    <property type="project" value="InterPro"/>
</dbReference>
<dbReference type="GO" id="GO:0016776">
    <property type="term" value="F:phosphotransferase activity, phosphate group as acceptor"/>
    <property type="evidence" value="ECO:0007669"/>
    <property type="project" value="UniProtKB-UniRule"/>
</dbReference>
<dbReference type="GO" id="GO:0004674">
    <property type="term" value="F:protein serine/threonine kinase activity"/>
    <property type="evidence" value="ECO:0007669"/>
    <property type="project" value="UniProtKB-UniRule"/>
</dbReference>
<dbReference type="HAMAP" id="MF_00921">
    <property type="entry name" value="PDRP"/>
    <property type="match status" value="1"/>
</dbReference>
<dbReference type="InterPro" id="IPR005177">
    <property type="entry name" value="Kinase-pyrophosphorylase"/>
</dbReference>
<dbReference type="InterPro" id="IPR026565">
    <property type="entry name" value="PPDK_reg"/>
</dbReference>
<dbReference type="NCBIfam" id="NF003742">
    <property type="entry name" value="PRK05339.1"/>
    <property type="match status" value="1"/>
</dbReference>
<dbReference type="PANTHER" id="PTHR31756">
    <property type="entry name" value="PYRUVATE, PHOSPHATE DIKINASE REGULATORY PROTEIN 1, CHLOROPLASTIC"/>
    <property type="match status" value="1"/>
</dbReference>
<dbReference type="PANTHER" id="PTHR31756:SF3">
    <property type="entry name" value="PYRUVATE, PHOSPHATE DIKINASE REGULATORY PROTEIN 1, CHLOROPLASTIC"/>
    <property type="match status" value="1"/>
</dbReference>
<dbReference type="Pfam" id="PF03618">
    <property type="entry name" value="Kinase-PPPase"/>
    <property type="match status" value="1"/>
</dbReference>
<reference key="1">
    <citation type="journal article" date="2006" name="J. Bacteriol.">
        <title>Whole-genome sequence of Listeria welshimeri reveals common steps in genome reduction with Listeria innocua as compared to Listeria monocytogenes.</title>
        <authorList>
            <person name="Hain T."/>
            <person name="Steinweg C."/>
            <person name="Kuenne C.T."/>
            <person name="Billion A."/>
            <person name="Ghai R."/>
            <person name="Chatterjee S.S."/>
            <person name="Domann E."/>
            <person name="Kaerst U."/>
            <person name="Goesmann A."/>
            <person name="Bekel T."/>
            <person name="Bartels D."/>
            <person name="Kaiser O."/>
            <person name="Meyer F."/>
            <person name="Puehler A."/>
            <person name="Weisshaar B."/>
            <person name="Wehland J."/>
            <person name="Liang C."/>
            <person name="Dandekar T."/>
            <person name="Lampidis R."/>
            <person name="Kreft J."/>
            <person name="Goebel W."/>
            <person name="Chakraborty T."/>
        </authorList>
    </citation>
    <scope>NUCLEOTIDE SEQUENCE [LARGE SCALE GENOMIC DNA]</scope>
    <source>
        <strain>ATCC 35897 / DSM 20650 / CCUG 15529 / CIP 8149 / NCTC 11857 / SLCC 5334 / V8</strain>
    </source>
</reference>
<accession>A0AIQ8</accession>
<name>PDRP1_LISW6</name>
<evidence type="ECO:0000255" key="1">
    <source>
        <dbReference type="HAMAP-Rule" id="MF_00921"/>
    </source>
</evidence>